<keyword id="KW-1185">Reference proteome</keyword>
<dbReference type="EMBL" id="CP000800">
    <property type="protein sequence ID" value="ABV16536.1"/>
    <property type="molecule type" value="Genomic_DNA"/>
</dbReference>
<dbReference type="RefSeq" id="WP_000219686.1">
    <property type="nucleotide sequence ID" value="NC_009801.1"/>
</dbReference>
<dbReference type="SMR" id="A7ZMQ4"/>
<dbReference type="KEGG" id="ecw:EcE24377A_2008"/>
<dbReference type="HOGENOM" id="CLU_049702_0_0_6"/>
<dbReference type="Proteomes" id="UP000001122">
    <property type="component" value="Chromosome"/>
</dbReference>
<dbReference type="HAMAP" id="MF_01232">
    <property type="entry name" value="UPF0229"/>
    <property type="match status" value="1"/>
</dbReference>
<dbReference type="InterPro" id="IPR006698">
    <property type="entry name" value="UPF0229"/>
</dbReference>
<dbReference type="NCBIfam" id="NF003707">
    <property type="entry name" value="PRK05325.1-2"/>
    <property type="match status" value="1"/>
</dbReference>
<dbReference type="NCBIfam" id="NF003708">
    <property type="entry name" value="PRK05325.1-3"/>
    <property type="match status" value="1"/>
</dbReference>
<dbReference type="PANTHER" id="PTHR30510">
    <property type="entry name" value="UPF0229 PROTEIN YEAH"/>
    <property type="match status" value="1"/>
</dbReference>
<dbReference type="PANTHER" id="PTHR30510:SF2">
    <property type="entry name" value="UPF0229 PROTEIN YEAH"/>
    <property type="match status" value="1"/>
</dbReference>
<dbReference type="Pfam" id="PF04285">
    <property type="entry name" value="DUF444"/>
    <property type="match status" value="1"/>
</dbReference>
<sequence length="427" mass="49450">MTWFIDRRLNGKNKSMVNRQRFLRRYKAQIKQSISEAINKRSVTDVDSGESVSIPTEDISEPMFHQGRGGLRHRVHPGNDHFVQNDRIERPQGGGGGSGSGQGQASQDGEGQDEFVFQISKDEYLDLLFEDLALPNLKQNQQRQLTEYKTHRAGYTANGVPANISVVRSLQNSLARRTAMTAGKRRELHALEENLAIISNSEPAQLLEEERLRKEIAELRAKIERVPFIDTFDLRYKNYEKRPDPSSQAVMFCLMDVSGSMDQSTKDMAKRFYILLYLFLSRTYKNVEVVYIRHHTQAKEVDEHEFFYSQETGGTIVSSALKLMDEVVKERYNPAQWNIYAAQASDGDNWADDSPLCHEILAKKLLPVVRYYSYIEITRRAHQTLWREYEHLQSTFDNFAMQHIRDQDDIYPVFRELFHKQNATAKD</sequence>
<comment type="similarity">
    <text evidence="1">Belongs to the UPF0229 family.</text>
</comment>
<protein>
    <recommendedName>
        <fullName evidence="1">UPF0229 protein YeaH</fullName>
    </recommendedName>
</protein>
<evidence type="ECO:0000255" key="1">
    <source>
        <dbReference type="HAMAP-Rule" id="MF_01232"/>
    </source>
</evidence>
<evidence type="ECO:0000256" key="2">
    <source>
        <dbReference type="SAM" id="MobiDB-lite"/>
    </source>
</evidence>
<name>YEAH_ECO24</name>
<feature type="chain" id="PRO_1000066854" description="UPF0229 protein YeaH">
    <location>
        <begin position="1"/>
        <end position="427"/>
    </location>
</feature>
<feature type="region of interest" description="Disordered" evidence="2">
    <location>
        <begin position="79"/>
        <end position="110"/>
    </location>
</feature>
<feature type="compositionally biased region" description="Basic and acidic residues" evidence="2">
    <location>
        <begin position="79"/>
        <end position="90"/>
    </location>
</feature>
<feature type="compositionally biased region" description="Gly residues" evidence="2">
    <location>
        <begin position="92"/>
        <end position="102"/>
    </location>
</feature>
<organism>
    <name type="scientific">Escherichia coli O139:H28 (strain E24377A / ETEC)</name>
    <dbReference type="NCBI Taxonomy" id="331111"/>
    <lineage>
        <taxon>Bacteria</taxon>
        <taxon>Pseudomonadati</taxon>
        <taxon>Pseudomonadota</taxon>
        <taxon>Gammaproteobacteria</taxon>
        <taxon>Enterobacterales</taxon>
        <taxon>Enterobacteriaceae</taxon>
        <taxon>Escherichia</taxon>
    </lineage>
</organism>
<proteinExistence type="inferred from homology"/>
<reference key="1">
    <citation type="journal article" date="2008" name="J. Bacteriol.">
        <title>The pangenome structure of Escherichia coli: comparative genomic analysis of E. coli commensal and pathogenic isolates.</title>
        <authorList>
            <person name="Rasko D.A."/>
            <person name="Rosovitz M.J."/>
            <person name="Myers G.S.A."/>
            <person name="Mongodin E.F."/>
            <person name="Fricke W.F."/>
            <person name="Gajer P."/>
            <person name="Crabtree J."/>
            <person name="Sebaihia M."/>
            <person name="Thomson N.R."/>
            <person name="Chaudhuri R."/>
            <person name="Henderson I.R."/>
            <person name="Sperandio V."/>
            <person name="Ravel J."/>
        </authorList>
    </citation>
    <scope>NUCLEOTIDE SEQUENCE [LARGE SCALE GENOMIC DNA]</scope>
    <source>
        <strain>E24377A / ETEC</strain>
    </source>
</reference>
<accession>A7ZMQ4</accession>
<gene>
    <name evidence="1" type="primary">yeaH</name>
    <name type="ordered locus">EcE24377A_2008</name>
</gene>